<keyword id="KW-0378">Hydrolase</keyword>
<dbReference type="EC" id="3.6.1.-" evidence="1"/>
<dbReference type="EMBL" id="CP000075">
    <property type="protein sequence ID" value="AAY39870.1"/>
    <property type="molecule type" value="Genomic_DNA"/>
</dbReference>
<dbReference type="RefSeq" id="WP_002555745.1">
    <property type="nucleotide sequence ID" value="NC_007005.1"/>
</dbReference>
<dbReference type="RefSeq" id="YP_237908.1">
    <property type="nucleotide sequence ID" value="NC_007005.1"/>
</dbReference>
<dbReference type="SMR" id="Q4ZLV2"/>
<dbReference type="STRING" id="205918.Psyr_4843"/>
<dbReference type="KEGG" id="psb:Psyr_4843"/>
<dbReference type="PATRIC" id="fig|205918.7.peg.5008"/>
<dbReference type="eggNOG" id="COG0494">
    <property type="taxonomic scope" value="Bacteria"/>
</dbReference>
<dbReference type="HOGENOM" id="CLU_087195_3_1_6"/>
<dbReference type="OrthoDB" id="9816040at2"/>
<dbReference type="Proteomes" id="UP000000426">
    <property type="component" value="Chromosome"/>
</dbReference>
<dbReference type="GO" id="GO:0005737">
    <property type="term" value="C:cytoplasm"/>
    <property type="evidence" value="ECO:0007669"/>
    <property type="project" value="TreeGrafter"/>
</dbReference>
<dbReference type="GO" id="GO:0034353">
    <property type="term" value="F:mRNA 5'-diphosphatase activity"/>
    <property type="evidence" value="ECO:0007669"/>
    <property type="project" value="TreeGrafter"/>
</dbReference>
<dbReference type="GO" id="GO:0006402">
    <property type="term" value="P:mRNA catabolic process"/>
    <property type="evidence" value="ECO:0007669"/>
    <property type="project" value="TreeGrafter"/>
</dbReference>
<dbReference type="CDD" id="cd03671">
    <property type="entry name" value="NUDIX_Ap4A_hydrolase_plant_like"/>
    <property type="match status" value="1"/>
</dbReference>
<dbReference type="FunFam" id="3.90.79.10:FF:000001">
    <property type="entry name" value="RNA pyrophosphohydrolase"/>
    <property type="match status" value="1"/>
</dbReference>
<dbReference type="Gene3D" id="3.90.79.10">
    <property type="entry name" value="Nucleoside Triphosphate Pyrophosphohydrolase"/>
    <property type="match status" value="1"/>
</dbReference>
<dbReference type="HAMAP" id="MF_00298">
    <property type="entry name" value="Nudix_RppH"/>
    <property type="match status" value="1"/>
</dbReference>
<dbReference type="InterPro" id="IPR020476">
    <property type="entry name" value="Nudix_hydrolase"/>
</dbReference>
<dbReference type="InterPro" id="IPR015797">
    <property type="entry name" value="NUDIX_hydrolase-like_dom_sf"/>
</dbReference>
<dbReference type="InterPro" id="IPR020084">
    <property type="entry name" value="NUDIX_hydrolase_CS"/>
</dbReference>
<dbReference type="InterPro" id="IPR000086">
    <property type="entry name" value="NUDIX_hydrolase_dom"/>
</dbReference>
<dbReference type="InterPro" id="IPR022927">
    <property type="entry name" value="RppH"/>
</dbReference>
<dbReference type="NCBIfam" id="NF001934">
    <property type="entry name" value="PRK00714.1-1"/>
    <property type="match status" value="1"/>
</dbReference>
<dbReference type="NCBIfam" id="NF001937">
    <property type="entry name" value="PRK00714.1-4"/>
    <property type="match status" value="1"/>
</dbReference>
<dbReference type="NCBIfam" id="NF001938">
    <property type="entry name" value="PRK00714.1-5"/>
    <property type="match status" value="1"/>
</dbReference>
<dbReference type="PANTHER" id="PTHR23114">
    <property type="entry name" value="M7GPPPN-MRNA HYDROLASE"/>
    <property type="match status" value="1"/>
</dbReference>
<dbReference type="PANTHER" id="PTHR23114:SF17">
    <property type="entry name" value="M7GPPPN-MRNA HYDROLASE"/>
    <property type="match status" value="1"/>
</dbReference>
<dbReference type="Pfam" id="PF00293">
    <property type="entry name" value="NUDIX"/>
    <property type="match status" value="1"/>
</dbReference>
<dbReference type="PRINTS" id="PR00502">
    <property type="entry name" value="NUDIXFAMILY"/>
</dbReference>
<dbReference type="SUPFAM" id="SSF55811">
    <property type="entry name" value="Nudix"/>
    <property type="match status" value="1"/>
</dbReference>
<dbReference type="PROSITE" id="PS51462">
    <property type="entry name" value="NUDIX"/>
    <property type="match status" value="1"/>
</dbReference>
<dbReference type="PROSITE" id="PS00893">
    <property type="entry name" value="NUDIX_BOX"/>
    <property type="match status" value="1"/>
</dbReference>
<comment type="function">
    <text evidence="1">Accelerates the degradation of transcripts by removing pyrophosphate from the 5'-end of triphosphorylated RNA, leading to a more labile monophosphorylated state that can stimulate subsequent ribonuclease cleavage.</text>
</comment>
<comment type="cofactor">
    <cofactor evidence="1">
        <name>a divalent metal cation</name>
        <dbReference type="ChEBI" id="CHEBI:60240"/>
    </cofactor>
</comment>
<comment type="similarity">
    <text evidence="1">Belongs to the Nudix hydrolase family. RppH subfamily.</text>
</comment>
<reference key="1">
    <citation type="journal article" date="2005" name="Proc. Natl. Acad. Sci. U.S.A.">
        <title>Comparison of the complete genome sequences of Pseudomonas syringae pv. syringae B728a and pv. tomato DC3000.</title>
        <authorList>
            <person name="Feil H."/>
            <person name="Feil W.S."/>
            <person name="Chain P."/>
            <person name="Larimer F."/>
            <person name="Dibartolo G."/>
            <person name="Copeland A."/>
            <person name="Lykidis A."/>
            <person name="Trong S."/>
            <person name="Nolan M."/>
            <person name="Goltsman E."/>
            <person name="Thiel J."/>
            <person name="Malfatti S."/>
            <person name="Loper J.E."/>
            <person name="Lapidus A."/>
            <person name="Detter J.C."/>
            <person name="Land M."/>
            <person name="Richardson P.M."/>
            <person name="Kyrpides N.C."/>
            <person name="Ivanova N."/>
            <person name="Lindow S.E."/>
        </authorList>
    </citation>
    <scope>NUCLEOTIDE SEQUENCE [LARGE SCALE GENOMIC DNA]</scope>
    <source>
        <strain>B728a</strain>
    </source>
</reference>
<accession>Q4ZLV2</accession>
<gene>
    <name evidence="1" type="primary">rppH</name>
    <name evidence="1" type="synonym">nudH</name>
    <name type="ordered locus">Psyr_4843</name>
</gene>
<organism>
    <name type="scientific">Pseudomonas syringae pv. syringae (strain B728a)</name>
    <dbReference type="NCBI Taxonomy" id="205918"/>
    <lineage>
        <taxon>Bacteria</taxon>
        <taxon>Pseudomonadati</taxon>
        <taxon>Pseudomonadota</taxon>
        <taxon>Gammaproteobacteria</taxon>
        <taxon>Pseudomonadales</taxon>
        <taxon>Pseudomonadaceae</taxon>
        <taxon>Pseudomonas</taxon>
        <taxon>Pseudomonas syringae</taxon>
    </lineage>
</organism>
<name>RPPH_PSEU2</name>
<proteinExistence type="inferred from homology"/>
<sequence>MIDPDGFRPNVGIILTNDAGQVLWARRINQDAWQFPQGGINPQETPEDALYRELNEEVGLERHDVQILACTRGWLRYRLPQRLVRTHSQPLCIGQKQKWFLLRLISNEQRVRMDLTGKPEFDGWRWVSYWYPLGQVVTFKREVYRRALKELAPRLLSRD</sequence>
<feature type="chain" id="PRO_0000231927" description="RNA pyrophosphohydrolase">
    <location>
        <begin position="1"/>
        <end position="159"/>
    </location>
</feature>
<feature type="domain" description="Nudix hydrolase" evidence="1">
    <location>
        <begin position="6"/>
        <end position="149"/>
    </location>
</feature>
<feature type="short sequence motif" description="Nudix box">
    <location>
        <begin position="38"/>
        <end position="59"/>
    </location>
</feature>
<evidence type="ECO:0000255" key="1">
    <source>
        <dbReference type="HAMAP-Rule" id="MF_00298"/>
    </source>
</evidence>
<protein>
    <recommendedName>
        <fullName evidence="1">RNA pyrophosphohydrolase</fullName>
        <ecNumber evidence="1">3.6.1.-</ecNumber>
    </recommendedName>
    <alternativeName>
        <fullName evidence="1">(Di)nucleoside polyphosphate hydrolase</fullName>
    </alternativeName>
</protein>